<organism>
    <name type="scientific">Citrobacter freundii</name>
    <dbReference type="NCBI Taxonomy" id="546"/>
    <lineage>
        <taxon>Bacteria</taxon>
        <taxon>Pseudomonadati</taxon>
        <taxon>Pseudomonadota</taxon>
        <taxon>Gammaproteobacteria</taxon>
        <taxon>Enterobacterales</taxon>
        <taxon>Enterobacteriaceae</taxon>
        <taxon>Citrobacter</taxon>
        <taxon>Citrobacter freundii complex</taxon>
    </lineage>
</organism>
<comment type="function">
    <text>Bacterial hemolysins are exotoxins that attack blood cell membranes and cause cell rupture by mechanisms not clearly defined.</text>
</comment>
<accession>P23182</accession>
<reference key="1">
    <citation type="journal article" date="1988" name="FEMS Microbiol. Lett.">
        <title>DNA sequence of haemolysin genes from Citrobacter freundii.</title>
        <authorList>
            <person name="al Zaag A."/>
            <person name="Pemberton J.M."/>
        </authorList>
    </citation>
    <scope>NUCLEOTIDE SEQUENCE [GENOMIC DNA]</scope>
</reference>
<dbReference type="PIR" id="S06446">
    <property type="entry name" value="S06446"/>
</dbReference>
<dbReference type="GO" id="GO:0031640">
    <property type="term" value="P:killing of cells of another organism"/>
    <property type="evidence" value="ECO:0007669"/>
    <property type="project" value="UniProtKB-KW"/>
</dbReference>
<name>CIR1_CITFR</name>
<proteinExistence type="predicted"/>
<sequence length="618" mass="70472">MLPEHLARISRRYVILLALVGLYVCYLFLPRWLVLACGLRRTLLSCHTCFLCEIVIPSHSTQHTSRNDKVKAWCLTSEYSLIGWYAFSGEMCAVINEWKGGEGFGIGRCFFKWRSDDVWRVEVVREYDWYGRIISRSIRDGAGSYRYQSRSDRDRSCFHHVFHHCPSAFYHLACANLVRSCGDLRWIGMANLNLYTVTAICVRWRVTKPLTGARITAVLCTRALEFIWYRLKRVRPASLFHQLFHHLRRPFWNLLRQTGCPAVAGRTRIGMAKSYICLVLPRNAAVGGGCLDDIIDPQNNKQSPGSSEMEAAFAVTKAAANRASCRKIPMLHIGVSWGCRSIRRIPEFIYVIVLLILSTKHKQIAVLNRPKDRCEASVGIILDPREFVIMSWLFPVSNSVIRSQFHTTYRAGKHKVNTWCSHLIALASLRGFINFSVIYHGSSLNENYQKSQDAGEHAVLLLYSPGPMAQQHCGIVAQEGGDVCGGLYARACLGDRSLTVQRLSDYRVSYQRLRLLEQLRAGRILATALGAKLPRRDAACAGCVAHGVGGDVWRRVLVRAACWRQISYSAAIVNLMWWRSHDDEYSYYARLDCSSRLFCWGHVRKIPEWVICHSFLYY</sequence>
<feature type="chain" id="PRO_0000196249" description="Citrolysin protein 1">
    <location>
        <begin position="1"/>
        <end position="618"/>
    </location>
</feature>
<keyword id="KW-0204">Cytolysis</keyword>
<keyword id="KW-0354">Hemolysis</keyword>
<protein>
    <recommendedName>
        <fullName>Citrolysin protein 1</fullName>
    </recommendedName>
</protein>